<feature type="chain" id="PRO_1000092441" description="Elongation factor 4">
    <location>
        <begin position="1"/>
        <end position="599"/>
    </location>
</feature>
<feature type="domain" description="tr-type G">
    <location>
        <begin position="2"/>
        <end position="184"/>
    </location>
</feature>
<feature type="binding site" evidence="1">
    <location>
        <begin position="14"/>
        <end position="19"/>
    </location>
    <ligand>
        <name>GTP</name>
        <dbReference type="ChEBI" id="CHEBI:37565"/>
    </ligand>
</feature>
<feature type="binding site" evidence="1">
    <location>
        <begin position="131"/>
        <end position="134"/>
    </location>
    <ligand>
        <name>GTP</name>
        <dbReference type="ChEBI" id="CHEBI:37565"/>
    </ligand>
</feature>
<organism>
    <name type="scientific">Salmonella gallinarum (strain 287/91 / NCTC 13346)</name>
    <dbReference type="NCBI Taxonomy" id="550538"/>
    <lineage>
        <taxon>Bacteria</taxon>
        <taxon>Pseudomonadati</taxon>
        <taxon>Pseudomonadota</taxon>
        <taxon>Gammaproteobacteria</taxon>
        <taxon>Enterobacterales</taxon>
        <taxon>Enterobacteriaceae</taxon>
        <taxon>Salmonella</taxon>
    </lineage>
</organism>
<sequence>MKNIRNFSIIAHIDHGKSTLSDRIIQICGGLSDREMEAQVLDSMDLERERGITIKAQSVTLDFKASDGETYQLNFIDTPGHVDFSYEVSRSLAACEGALLVVDAGQGVEAQTLANCYTAMEMDLEVVPVLNKIDLPAADPERVAEEIEDIVGIDATDAVRCSAKTGVGVTDVLERLVRDIPPPQGDPDGPLQALIIDSWFDNYLGVVSLVRIKNGTMRKGDKIKVMSTGQTYNADRLGIFTPKQVDRTELKCGEVGWLVCAIKDILGAPVGDTLTSARNPAEKALPGFKKVKPQVYAGLFPVSSDDYESFRDALGKLSLNDASLFYEPESSSALGFGFRCGFLGLLHMEIIQERLEREYDLDLITTAPTVVYEVETTAKETIYVDSPSKLPPLNNIYELREPIAECHMLLPQAYLGNVITLCIEKRGVQTNMVYHGNQVALTYEIPMAEVVLDFFDRLKSTSRGYASLDYNFKRFQASDMVRVDVLINNERVDALALITHRDNSQSRGRELVEKMKDLIPRQQFDIAIQAAIGTHIIARSTVKQLRKNVLAKCYGGDISRKKKLLQKQKEGKKRMKRIGNVELPQEAFLAILHVGKDNR</sequence>
<comment type="function">
    <text evidence="1">Required for accurate and efficient protein synthesis under certain stress conditions. May act as a fidelity factor of the translation reaction, by catalyzing a one-codon backward translocation of tRNAs on improperly translocated ribosomes. Back-translocation proceeds from a post-translocation (POST) complex to a pre-translocation (PRE) complex, thus giving elongation factor G a second chance to translocate the tRNAs correctly. Binds to ribosomes in a GTP-dependent manner.</text>
</comment>
<comment type="catalytic activity">
    <reaction evidence="1">
        <text>GTP + H2O = GDP + phosphate + H(+)</text>
        <dbReference type="Rhea" id="RHEA:19669"/>
        <dbReference type="ChEBI" id="CHEBI:15377"/>
        <dbReference type="ChEBI" id="CHEBI:15378"/>
        <dbReference type="ChEBI" id="CHEBI:37565"/>
        <dbReference type="ChEBI" id="CHEBI:43474"/>
        <dbReference type="ChEBI" id="CHEBI:58189"/>
        <dbReference type="EC" id="3.6.5.n1"/>
    </reaction>
</comment>
<comment type="subcellular location">
    <subcellularLocation>
        <location evidence="1">Cell inner membrane</location>
        <topology evidence="1">Peripheral membrane protein</topology>
        <orientation evidence="1">Cytoplasmic side</orientation>
    </subcellularLocation>
</comment>
<comment type="similarity">
    <text evidence="1">Belongs to the TRAFAC class translation factor GTPase superfamily. Classic translation factor GTPase family. LepA subfamily.</text>
</comment>
<name>LEPA_SALG2</name>
<keyword id="KW-0997">Cell inner membrane</keyword>
<keyword id="KW-1003">Cell membrane</keyword>
<keyword id="KW-0342">GTP-binding</keyword>
<keyword id="KW-0378">Hydrolase</keyword>
<keyword id="KW-0472">Membrane</keyword>
<keyword id="KW-0547">Nucleotide-binding</keyword>
<keyword id="KW-0648">Protein biosynthesis</keyword>
<gene>
    <name evidence="1" type="primary">lepA</name>
    <name type="ordered locus">SG2620</name>
</gene>
<accession>B5RD51</accession>
<evidence type="ECO:0000255" key="1">
    <source>
        <dbReference type="HAMAP-Rule" id="MF_00071"/>
    </source>
</evidence>
<protein>
    <recommendedName>
        <fullName evidence="1">Elongation factor 4</fullName>
        <shortName evidence="1">EF-4</shortName>
        <ecNumber evidence="1">3.6.5.n1</ecNumber>
    </recommendedName>
    <alternativeName>
        <fullName evidence="1">Ribosomal back-translocase LepA</fullName>
    </alternativeName>
</protein>
<dbReference type="EC" id="3.6.5.n1" evidence="1"/>
<dbReference type="EMBL" id="AM933173">
    <property type="protein sequence ID" value="CAR38437.1"/>
    <property type="molecule type" value="Genomic_DNA"/>
</dbReference>
<dbReference type="RefSeq" id="WP_000790155.1">
    <property type="nucleotide sequence ID" value="NC_011274.1"/>
</dbReference>
<dbReference type="SMR" id="B5RD51"/>
<dbReference type="KEGG" id="seg:SG2620"/>
<dbReference type="HOGENOM" id="CLU_009995_3_3_6"/>
<dbReference type="Proteomes" id="UP000008321">
    <property type="component" value="Chromosome"/>
</dbReference>
<dbReference type="GO" id="GO:0005886">
    <property type="term" value="C:plasma membrane"/>
    <property type="evidence" value="ECO:0007669"/>
    <property type="project" value="UniProtKB-SubCell"/>
</dbReference>
<dbReference type="GO" id="GO:0005525">
    <property type="term" value="F:GTP binding"/>
    <property type="evidence" value="ECO:0007669"/>
    <property type="project" value="UniProtKB-UniRule"/>
</dbReference>
<dbReference type="GO" id="GO:0003924">
    <property type="term" value="F:GTPase activity"/>
    <property type="evidence" value="ECO:0007669"/>
    <property type="project" value="UniProtKB-UniRule"/>
</dbReference>
<dbReference type="GO" id="GO:0097216">
    <property type="term" value="F:guanosine tetraphosphate binding"/>
    <property type="evidence" value="ECO:0007669"/>
    <property type="project" value="UniProtKB-ARBA"/>
</dbReference>
<dbReference type="GO" id="GO:0043022">
    <property type="term" value="F:ribosome binding"/>
    <property type="evidence" value="ECO:0007669"/>
    <property type="project" value="UniProtKB-UniRule"/>
</dbReference>
<dbReference type="GO" id="GO:0003746">
    <property type="term" value="F:translation elongation factor activity"/>
    <property type="evidence" value="ECO:0007669"/>
    <property type="project" value="UniProtKB-UniRule"/>
</dbReference>
<dbReference type="GO" id="GO:0045727">
    <property type="term" value="P:positive regulation of translation"/>
    <property type="evidence" value="ECO:0007669"/>
    <property type="project" value="UniProtKB-UniRule"/>
</dbReference>
<dbReference type="CDD" id="cd03699">
    <property type="entry name" value="EF4_II"/>
    <property type="match status" value="1"/>
</dbReference>
<dbReference type="CDD" id="cd16260">
    <property type="entry name" value="EF4_III"/>
    <property type="match status" value="1"/>
</dbReference>
<dbReference type="CDD" id="cd01890">
    <property type="entry name" value="LepA"/>
    <property type="match status" value="1"/>
</dbReference>
<dbReference type="CDD" id="cd03709">
    <property type="entry name" value="lepA_C"/>
    <property type="match status" value="1"/>
</dbReference>
<dbReference type="FunFam" id="3.30.70.240:FF:000005">
    <property type="entry name" value="Elongation factor 4"/>
    <property type="match status" value="1"/>
</dbReference>
<dbReference type="FunFam" id="3.40.50.300:FF:000078">
    <property type="entry name" value="Elongation factor 4"/>
    <property type="match status" value="1"/>
</dbReference>
<dbReference type="FunFam" id="2.40.30.10:FF:000015">
    <property type="entry name" value="Translation factor GUF1, mitochondrial"/>
    <property type="match status" value="1"/>
</dbReference>
<dbReference type="FunFam" id="3.30.70.2570:FF:000001">
    <property type="entry name" value="Translation factor GUF1, mitochondrial"/>
    <property type="match status" value="1"/>
</dbReference>
<dbReference type="FunFam" id="3.30.70.870:FF:000004">
    <property type="entry name" value="Translation factor GUF1, mitochondrial"/>
    <property type="match status" value="1"/>
</dbReference>
<dbReference type="Gene3D" id="3.30.70.240">
    <property type="match status" value="1"/>
</dbReference>
<dbReference type="Gene3D" id="3.30.70.2570">
    <property type="entry name" value="Elongation factor 4, C-terminal domain"/>
    <property type="match status" value="1"/>
</dbReference>
<dbReference type="Gene3D" id="3.30.70.870">
    <property type="entry name" value="Elongation Factor G (Translational Gtpase), domain 3"/>
    <property type="match status" value="1"/>
</dbReference>
<dbReference type="Gene3D" id="3.40.50.300">
    <property type="entry name" value="P-loop containing nucleotide triphosphate hydrolases"/>
    <property type="match status" value="1"/>
</dbReference>
<dbReference type="Gene3D" id="2.40.30.10">
    <property type="entry name" value="Translation factors"/>
    <property type="match status" value="1"/>
</dbReference>
<dbReference type="HAMAP" id="MF_00071">
    <property type="entry name" value="LepA"/>
    <property type="match status" value="1"/>
</dbReference>
<dbReference type="InterPro" id="IPR006297">
    <property type="entry name" value="EF-4"/>
</dbReference>
<dbReference type="InterPro" id="IPR035647">
    <property type="entry name" value="EFG_III/V"/>
</dbReference>
<dbReference type="InterPro" id="IPR000640">
    <property type="entry name" value="EFG_V-like"/>
</dbReference>
<dbReference type="InterPro" id="IPR004161">
    <property type="entry name" value="EFTu-like_2"/>
</dbReference>
<dbReference type="InterPro" id="IPR031157">
    <property type="entry name" value="G_TR_CS"/>
</dbReference>
<dbReference type="InterPro" id="IPR038363">
    <property type="entry name" value="LepA_C_sf"/>
</dbReference>
<dbReference type="InterPro" id="IPR013842">
    <property type="entry name" value="LepA_CTD"/>
</dbReference>
<dbReference type="InterPro" id="IPR035654">
    <property type="entry name" value="LepA_IV"/>
</dbReference>
<dbReference type="InterPro" id="IPR027417">
    <property type="entry name" value="P-loop_NTPase"/>
</dbReference>
<dbReference type="InterPro" id="IPR005225">
    <property type="entry name" value="Small_GTP-bd"/>
</dbReference>
<dbReference type="InterPro" id="IPR000795">
    <property type="entry name" value="T_Tr_GTP-bd_dom"/>
</dbReference>
<dbReference type="NCBIfam" id="TIGR01393">
    <property type="entry name" value="lepA"/>
    <property type="match status" value="1"/>
</dbReference>
<dbReference type="NCBIfam" id="TIGR00231">
    <property type="entry name" value="small_GTP"/>
    <property type="match status" value="1"/>
</dbReference>
<dbReference type="PANTHER" id="PTHR43512:SF4">
    <property type="entry name" value="TRANSLATION FACTOR GUF1 HOMOLOG, CHLOROPLASTIC"/>
    <property type="match status" value="1"/>
</dbReference>
<dbReference type="PANTHER" id="PTHR43512">
    <property type="entry name" value="TRANSLATION FACTOR GUF1-RELATED"/>
    <property type="match status" value="1"/>
</dbReference>
<dbReference type="Pfam" id="PF00679">
    <property type="entry name" value="EFG_C"/>
    <property type="match status" value="1"/>
</dbReference>
<dbReference type="Pfam" id="PF00009">
    <property type="entry name" value="GTP_EFTU"/>
    <property type="match status" value="1"/>
</dbReference>
<dbReference type="Pfam" id="PF03144">
    <property type="entry name" value="GTP_EFTU_D2"/>
    <property type="match status" value="1"/>
</dbReference>
<dbReference type="Pfam" id="PF06421">
    <property type="entry name" value="LepA_C"/>
    <property type="match status" value="1"/>
</dbReference>
<dbReference type="PRINTS" id="PR00315">
    <property type="entry name" value="ELONGATNFCT"/>
</dbReference>
<dbReference type="SUPFAM" id="SSF54980">
    <property type="entry name" value="EF-G C-terminal domain-like"/>
    <property type="match status" value="2"/>
</dbReference>
<dbReference type="SUPFAM" id="SSF52540">
    <property type="entry name" value="P-loop containing nucleoside triphosphate hydrolases"/>
    <property type="match status" value="1"/>
</dbReference>
<dbReference type="PROSITE" id="PS00301">
    <property type="entry name" value="G_TR_1"/>
    <property type="match status" value="1"/>
</dbReference>
<dbReference type="PROSITE" id="PS51722">
    <property type="entry name" value="G_TR_2"/>
    <property type="match status" value="1"/>
</dbReference>
<reference key="1">
    <citation type="journal article" date="2008" name="Genome Res.">
        <title>Comparative genome analysis of Salmonella enteritidis PT4 and Salmonella gallinarum 287/91 provides insights into evolutionary and host adaptation pathways.</title>
        <authorList>
            <person name="Thomson N.R."/>
            <person name="Clayton D.J."/>
            <person name="Windhorst D."/>
            <person name="Vernikos G."/>
            <person name="Davidson S."/>
            <person name="Churcher C."/>
            <person name="Quail M.A."/>
            <person name="Stevens M."/>
            <person name="Jones M.A."/>
            <person name="Watson M."/>
            <person name="Barron A."/>
            <person name="Layton A."/>
            <person name="Pickard D."/>
            <person name="Kingsley R.A."/>
            <person name="Bignell A."/>
            <person name="Clark L."/>
            <person name="Harris B."/>
            <person name="Ormond D."/>
            <person name="Abdellah Z."/>
            <person name="Brooks K."/>
            <person name="Cherevach I."/>
            <person name="Chillingworth T."/>
            <person name="Woodward J."/>
            <person name="Norberczak H."/>
            <person name="Lord A."/>
            <person name="Arrowsmith C."/>
            <person name="Jagels K."/>
            <person name="Moule S."/>
            <person name="Mungall K."/>
            <person name="Saunders M."/>
            <person name="Whitehead S."/>
            <person name="Chabalgoity J.A."/>
            <person name="Maskell D."/>
            <person name="Humphreys T."/>
            <person name="Roberts M."/>
            <person name="Barrow P.A."/>
            <person name="Dougan G."/>
            <person name="Parkhill J."/>
        </authorList>
    </citation>
    <scope>NUCLEOTIDE SEQUENCE [LARGE SCALE GENOMIC DNA]</scope>
    <source>
        <strain>287/91 / NCTC 13346</strain>
    </source>
</reference>
<proteinExistence type="inferred from homology"/>